<feature type="chain" id="PRO_0000410964" description="Urea transporter 1">
    <location>
        <begin position="1"/>
        <end position="384"/>
    </location>
</feature>
<feature type="transmembrane region" description="Helical" evidence="4">
    <location>
        <begin position="61"/>
        <end position="81"/>
    </location>
</feature>
<feature type="transmembrane region" description="Helical" evidence="4">
    <location>
        <begin position="85"/>
        <end position="105"/>
    </location>
</feature>
<feature type="transmembrane region" description="Helical" evidence="4">
    <location>
        <begin position="111"/>
        <end position="131"/>
    </location>
</feature>
<feature type="transmembrane region" description="Helical" evidence="4">
    <location>
        <begin position="138"/>
        <end position="158"/>
    </location>
</feature>
<feature type="transmembrane region" description="Helical" evidence="4">
    <location>
        <begin position="168"/>
        <end position="188"/>
    </location>
</feature>
<feature type="transmembrane region" description="Helical" evidence="4">
    <location>
        <begin position="250"/>
        <end position="270"/>
    </location>
</feature>
<feature type="transmembrane region" description="Helical" evidence="4">
    <location>
        <begin position="279"/>
        <end position="299"/>
    </location>
</feature>
<feature type="transmembrane region" description="Helical" evidence="4">
    <location>
        <begin position="305"/>
        <end position="325"/>
    </location>
</feature>
<feature type="transmembrane region" description="Helical" evidence="4">
    <location>
        <begin position="327"/>
        <end position="347"/>
    </location>
</feature>
<feature type="site" description="Important for channel permeability" evidence="2">
    <location>
        <position position="334"/>
    </location>
</feature>
<feature type="glycosylation site" description="N-linked (GlcNAc...) asparagine" evidence="4">
    <location>
        <position position="206"/>
    </location>
</feature>
<feature type="splice variant" id="VSP_041576" description="In isoform 2." evidence="6">
    <original>M</original>
    <variation>MNGQSLSGGTDDSHHDPLWIDPFGNRAGKAAPGGFRRLNLFLAQRWQEQEPEEEMA</variation>
    <location>
        <position position="1"/>
    </location>
</feature>
<feature type="sequence conflict" description="In Ref. 1; AAB39937." evidence="6" ref="1">
    <original>C</original>
    <variation>W</variation>
    <location>
        <position position="25"/>
    </location>
</feature>
<feature type="sequence conflict" description="In Ref. 1; AAB39937." evidence="6" ref="1">
    <original>K</original>
    <variation>E</variation>
    <location>
        <position position="47"/>
    </location>
</feature>
<feature type="sequence conflict" description="In Ref. 1; AAB39937." evidence="6" ref="1">
    <original>V</original>
    <variation>G</variation>
    <location>
        <position position="50"/>
    </location>
</feature>
<feature type="sequence conflict" description="In Ref. 1; AAB39937." evidence="6" ref="1">
    <original>S</original>
    <variation>A</variation>
    <location>
        <position position="180"/>
    </location>
</feature>
<feature type="sequence conflict" description="In Ref. 1; AAB39937." evidence="6" ref="1">
    <original>G</original>
    <variation>R</variation>
    <location>
        <position position="266"/>
    </location>
</feature>
<feature type="sequence conflict" description="In Ref. 1; AAB39937." evidence="6" ref="1">
    <original>M</original>
    <variation>I</variation>
    <location>
        <position position="325"/>
    </location>
</feature>
<feature type="sequence conflict" description="In Ref. 1; AAB39937." evidence="6" ref="1">
    <original>L</original>
    <variation>F</variation>
    <location>
        <position position="339"/>
    </location>
</feature>
<feature type="sequence conflict" description="In Ref. 1; AAB39937." evidence="6" ref="1">
    <original>RV</original>
    <variation>SA</variation>
    <location>
        <begin position="378"/>
        <end position="379"/>
    </location>
</feature>
<feature type="sequence conflict" description="In Ref. 1; AAB39937." evidence="6" ref="1">
    <original>S</original>
    <variation>R</variation>
    <location>
        <position position="382"/>
    </location>
</feature>
<comment type="function">
    <text evidence="3 5">Mediates the transport of urea driven by a concentration gradient across the cell membrane (PubMed:8982255). Mediates the transport of urea across the cell membranes of erythrocytes and the renal inner medullary collecting duct which is critical to the urinary concentrating mechanism (By similarity). Facilitates water transport in erythrocytes (By similarity).</text>
</comment>
<comment type="catalytic activity">
    <reaction evidence="5">
        <text>urea(in) = urea(out)</text>
        <dbReference type="Rhea" id="RHEA:32799"/>
        <dbReference type="ChEBI" id="CHEBI:16199"/>
    </reaction>
</comment>
<comment type="subunit">
    <text evidence="1 2">Homotrimer; each subunit contains a pore through which urea permeates (By similarity). Identified in a complex with STOM (By similarity).</text>
</comment>
<comment type="subcellular location">
    <subcellularLocation>
        <location evidence="3">Cell membrane</location>
        <topology evidence="4">Multi-pass membrane protein</topology>
    </subcellularLocation>
    <subcellularLocation>
        <location evidence="3">Basolateral cell membrane</location>
        <topology evidence="4">Multi-pass membrane protein</topology>
    </subcellularLocation>
    <text evidence="3">Restricted to the basolateral membrane in various portions of the urothelium.</text>
</comment>
<comment type="alternative products">
    <event type="alternative splicing"/>
    <isoform>
        <id>P97689-1</id>
        <name>1</name>
        <sequence type="displayed"/>
    </isoform>
    <isoform>
        <id>P97689-2</id>
        <name>2</name>
        <sequence type="described" ref="VSP_041576"/>
    </isoform>
</comment>
<comment type="tissue specificity">
    <text evidence="5">Expressed in brain, spleen, kidney, testis and lung, with highest levels in brain.</text>
</comment>
<comment type="similarity">
    <text evidence="6">Belongs to the urea transporter family.</text>
</comment>
<comment type="sequence caution" evidence="6">
    <conflict type="miscellaneous discrepancy">
        <sequence resource="EMBL-CDS" id="CAA67049"/>
    </conflict>
</comment>
<evidence type="ECO:0000250" key="1">
    <source>
        <dbReference type="UniProtKB" id="Q13336"/>
    </source>
</evidence>
<evidence type="ECO:0000250" key="2">
    <source>
        <dbReference type="UniProtKB" id="Q5QF96"/>
    </source>
</evidence>
<evidence type="ECO:0000250" key="3">
    <source>
        <dbReference type="UniProtKB" id="Q8VHL0"/>
    </source>
</evidence>
<evidence type="ECO:0000255" key="4"/>
<evidence type="ECO:0000269" key="5">
    <source>
    </source>
</evidence>
<evidence type="ECO:0000305" key="6"/>
<gene>
    <name type="primary">Slc14a1</name>
    <name type="synonym">UT11</name>
    <name type="synonym">UT3</name>
</gene>
<keyword id="KW-0025">Alternative splicing</keyword>
<keyword id="KW-1003">Cell membrane</keyword>
<keyword id="KW-0325">Glycoprotein</keyword>
<keyword id="KW-0472">Membrane</keyword>
<keyword id="KW-1185">Reference proteome</keyword>
<keyword id="KW-0812">Transmembrane</keyword>
<keyword id="KW-1133">Transmembrane helix</keyword>
<keyword id="KW-0813">Transport</keyword>
<organism>
    <name type="scientific">Rattus norvegicus</name>
    <name type="common">Rat</name>
    <dbReference type="NCBI Taxonomy" id="10116"/>
    <lineage>
        <taxon>Eukaryota</taxon>
        <taxon>Metazoa</taxon>
        <taxon>Chordata</taxon>
        <taxon>Craniata</taxon>
        <taxon>Vertebrata</taxon>
        <taxon>Euteleostomi</taxon>
        <taxon>Mammalia</taxon>
        <taxon>Eutheria</taxon>
        <taxon>Euarchontoglires</taxon>
        <taxon>Glires</taxon>
        <taxon>Rodentia</taxon>
        <taxon>Myomorpha</taxon>
        <taxon>Muroidea</taxon>
        <taxon>Muridae</taxon>
        <taxon>Murinae</taxon>
        <taxon>Rattus</taxon>
    </lineage>
</organism>
<name>UT1_RAT</name>
<accession>P97689</accession>
<accession>E9PSP0</accession>
<accession>P70633</accession>
<sequence>MEDIPTMVKVDRGESQILSCRGRRCGLKVLGYVTGDMKEFANWLKDKPVVLQFMDWILRGISQVVFVSNPISGILILAGLLVQNPWWALCGCVGTVVSTLTALLLSQDRSAIAAGLQGYNATLVGILMAVFSDKGDYFWWLIFPVSAMSMTCPVFSSALSSLFSKWDLPVFTLPFNMALSLYLSATGHYNTFFPSKLFMPVSSVPNITWSELSALELLKSLPVGVGQIYGCDNPWTGAIFLCAILLSSPLMCLHAAIGSLLGVIAGLSLAAPFKDIYSGLWGFNSSLACIAIGGMFMALTWQTHLLALACALFTAYFGACMTHLMAAVHLPACTWSFCLATLLFLLLTTENPNIYRMPLSKVTYSEENRIFYLQNKKRVVDSPL</sequence>
<proteinExistence type="evidence at transcript level"/>
<protein>
    <recommendedName>
        <fullName>Urea transporter 1</fullName>
    </recommendedName>
    <alternativeName>
        <fullName>Solute carrier family 14 member 1</fullName>
    </alternativeName>
    <alternativeName>
        <fullName>Urea transporter B</fullName>
        <shortName>UT-B</shortName>
    </alternativeName>
    <alternativeName>
        <fullName>Urea transporter, erythrocyte</fullName>
    </alternativeName>
</protein>
<reference key="1">
    <citation type="submission" date="1996-12" db="EMBL/GenBank/DDBJ databases">
        <authorList>
            <person name="Tsukaguchi H."/>
            <person name="Shayakul C."/>
            <person name="Berger U.V."/>
            <person name="Tokui T."/>
            <person name="Brown D."/>
            <person name="Hediger M.A."/>
        </authorList>
    </citation>
    <scope>NUCLEOTIDE SEQUENCE [MRNA] (ISOFORM 1)</scope>
    <source>
        <strain>Sprague-Dawley</strain>
    </source>
</reference>
<reference key="2">
    <citation type="journal article" date="2004" name="Nature">
        <title>Genome sequence of the Brown Norway rat yields insights into mammalian evolution.</title>
        <authorList>
            <person name="Gibbs R.A."/>
            <person name="Weinstock G.M."/>
            <person name="Metzker M.L."/>
            <person name="Muzny D.M."/>
            <person name="Sodergren E.J."/>
            <person name="Scherer S."/>
            <person name="Scott G."/>
            <person name="Steffen D."/>
            <person name="Worley K.C."/>
            <person name="Burch P.E."/>
            <person name="Okwuonu G."/>
            <person name="Hines S."/>
            <person name="Lewis L."/>
            <person name="Deramo C."/>
            <person name="Delgado O."/>
            <person name="Dugan-Rocha S."/>
            <person name="Miner G."/>
            <person name="Morgan M."/>
            <person name="Hawes A."/>
            <person name="Gill R."/>
            <person name="Holt R.A."/>
            <person name="Adams M.D."/>
            <person name="Amanatides P.G."/>
            <person name="Baden-Tillson H."/>
            <person name="Barnstead M."/>
            <person name="Chin S."/>
            <person name="Evans C.A."/>
            <person name="Ferriera S."/>
            <person name="Fosler C."/>
            <person name="Glodek A."/>
            <person name="Gu Z."/>
            <person name="Jennings D."/>
            <person name="Kraft C.L."/>
            <person name="Nguyen T."/>
            <person name="Pfannkoch C.M."/>
            <person name="Sitter C."/>
            <person name="Sutton G.G."/>
            <person name="Venter J.C."/>
            <person name="Woodage T."/>
            <person name="Smith D."/>
            <person name="Lee H.-M."/>
            <person name="Gustafson E."/>
            <person name="Cahill P."/>
            <person name="Kana A."/>
            <person name="Doucette-Stamm L."/>
            <person name="Weinstock K."/>
            <person name="Fechtel K."/>
            <person name="Weiss R.B."/>
            <person name="Dunn D.M."/>
            <person name="Green E.D."/>
            <person name="Blakesley R.W."/>
            <person name="Bouffard G.G."/>
            <person name="De Jong P.J."/>
            <person name="Osoegawa K."/>
            <person name="Zhu B."/>
            <person name="Marra M."/>
            <person name="Schein J."/>
            <person name="Bosdet I."/>
            <person name="Fjell C."/>
            <person name="Jones S."/>
            <person name="Krzywinski M."/>
            <person name="Mathewson C."/>
            <person name="Siddiqui A."/>
            <person name="Wye N."/>
            <person name="McPherson J."/>
            <person name="Zhao S."/>
            <person name="Fraser C.M."/>
            <person name="Shetty J."/>
            <person name="Shatsman S."/>
            <person name="Geer K."/>
            <person name="Chen Y."/>
            <person name="Abramzon S."/>
            <person name="Nierman W.C."/>
            <person name="Havlak P.H."/>
            <person name="Chen R."/>
            <person name="Durbin K.J."/>
            <person name="Egan A."/>
            <person name="Ren Y."/>
            <person name="Song X.-Z."/>
            <person name="Li B."/>
            <person name="Liu Y."/>
            <person name="Qin X."/>
            <person name="Cawley S."/>
            <person name="Cooney A.J."/>
            <person name="D'Souza L.M."/>
            <person name="Martin K."/>
            <person name="Wu J.Q."/>
            <person name="Gonzalez-Garay M.L."/>
            <person name="Jackson A.R."/>
            <person name="Kalafus K.J."/>
            <person name="McLeod M.P."/>
            <person name="Milosavljevic A."/>
            <person name="Virk D."/>
            <person name="Volkov A."/>
            <person name="Wheeler D.A."/>
            <person name="Zhang Z."/>
            <person name="Bailey J.A."/>
            <person name="Eichler E.E."/>
            <person name="Tuzun E."/>
            <person name="Birney E."/>
            <person name="Mongin E."/>
            <person name="Ureta-Vidal A."/>
            <person name="Woodwark C."/>
            <person name="Zdobnov E."/>
            <person name="Bork P."/>
            <person name="Suyama M."/>
            <person name="Torrents D."/>
            <person name="Alexandersson M."/>
            <person name="Trask B.J."/>
            <person name="Young J.M."/>
            <person name="Huang H."/>
            <person name="Wang H."/>
            <person name="Xing H."/>
            <person name="Daniels S."/>
            <person name="Gietzen D."/>
            <person name="Schmidt J."/>
            <person name="Stevens K."/>
            <person name="Vitt U."/>
            <person name="Wingrove J."/>
            <person name="Camara F."/>
            <person name="Mar Alba M."/>
            <person name="Abril J.F."/>
            <person name="Guigo R."/>
            <person name="Smit A."/>
            <person name="Dubchak I."/>
            <person name="Rubin E.M."/>
            <person name="Couronne O."/>
            <person name="Poliakov A."/>
            <person name="Huebner N."/>
            <person name="Ganten D."/>
            <person name="Goesele C."/>
            <person name="Hummel O."/>
            <person name="Kreitler T."/>
            <person name="Lee Y.-A."/>
            <person name="Monti J."/>
            <person name="Schulz H."/>
            <person name="Zimdahl H."/>
            <person name="Himmelbauer H."/>
            <person name="Lehrach H."/>
            <person name="Jacob H.J."/>
            <person name="Bromberg S."/>
            <person name="Gullings-Handley J."/>
            <person name="Jensen-Seaman M.I."/>
            <person name="Kwitek A.E."/>
            <person name="Lazar J."/>
            <person name="Pasko D."/>
            <person name="Tonellato P.J."/>
            <person name="Twigger S."/>
            <person name="Ponting C.P."/>
            <person name="Duarte J.M."/>
            <person name="Rice S."/>
            <person name="Goodstadt L."/>
            <person name="Beatson S.A."/>
            <person name="Emes R.D."/>
            <person name="Winter E.E."/>
            <person name="Webber C."/>
            <person name="Brandt P."/>
            <person name="Nyakatura G."/>
            <person name="Adetobi M."/>
            <person name="Chiaromonte F."/>
            <person name="Elnitski L."/>
            <person name="Eswara P."/>
            <person name="Hardison R.C."/>
            <person name="Hou M."/>
            <person name="Kolbe D."/>
            <person name="Makova K."/>
            <person name="Miller W."/>
            <person name="Nekrutenko A."/>
            <person name="Riemer C."/>
            <person name="Schwartz S."/>
            <person name="Taylor J."/>
            <person name="Yang S."/>
            <person name="Zhang Y."/>
            <person name="Lindpaintner K."/>
            <person name="Andrews T.D."/>
            <person name="Caccamo M."/>
            <person name="Clamp M."/>
            <person name="Clarke L."/>
            <person name="Curwen V."/>
            <person name="Durbin R.M."/>
            <person name="Eyras E."/>
            <person name="Searle S.M."/>
            <person name="Cooper G.M."/>
            <person name="Batzoglou S."/>
            <person name="Brudno M."/>
            <person name="Sidow A."/>
            <person name="Stone E.A."/>
            <person name="Payseur B.A."/>
            <person name="Bourque G."/>
            <person name="Lopez-Otin C."/>
            <person name="Puente X.S."/>
            <person name="Chakrabarti K."/>
            <person name="Chatterji S."/>
            <person name="Dewey C."/>
            <person name="Pachter L."/>
            <person name="Bray N."/>
            <person name="Yap V.B."/>
            <person name="Caspi A."/>
            <person name="Tesler G."/>
            <person name="Pevzner P.A."/>
            <person name="Haussler D."/>
            <person name="Roskin K.M."/>
            <person name="Baertsch R."/>
            <person name="Clawson H."/>
            <person name="Furey T.S."/>
            <person name="Hinrichs A.S."/>
            <person name="Karolchik D."/>
            <person name="Kent W.J."/>
            <person name="Rosenbloom K.R."/>
            <person name="Trumbower H."/>
            <person name="Weirauch M."/>
            <person name="Cooper D.N."/>
            <person name="Stenson P.D."/>
            <person name="Ma B."/>
            <person name="Brent M."/>
            <person name="Arumugam M."/>
            <person name="Shteynberg D."/>
            <person name="Copley R.R."/>
            <person name="Taylor M.S."/>
            <person name="Riethman H."/>
            <person name="Mudunuri U."/>
            <person name="Peterson J."/>
            <person name="Guyer M."/>
            <person name="Felsenfeld A."/>
            <person name="Old S."/>
            <person name="Mockrin S."/>
            <person name="Collins F.S."/>
        </authorList>
    </citation>
    <scope>NUCLEOTIDE SEQUENCE [LARGE SCALE GENOMIC DNA]</scope>
    <source>
        <strain>Brown Norway</strain>
    </source>
</reference>
<reference key="3">
    <citation type="journal article" date="1996" name="Biochim. Biophys. Acta">
        <title>Cloning and functional characterization of a rat urea transporter: expression in the brain.</title>
        <authorList>
            <person name="Couriaud C."/>
            <person name="Ripoche P."/>
            <person name="Rousselet G."/>
        </authorList>
    </citation>
    <scope>NUCLEOTIDE SEQUENCE [MRNA] OF 1-382</scope>
    <scope>FUNCTION</scope>
    <scope>TRANSPORTER ACTIVITY</scope>
    <scope>TISSUE SPECIFICITY</scope>
    <source>
        <strain>Sprague-Dawley</strain>
        <tissue>Kidney</tissue>
    </source>
</reference>
<dbReference type="EMBL" id="U81518">
    <property type="protein sequence ID" value="AAB39937.1"/>
    <property type="molecule type" value="mRNA"/>
</dbReference>
<dbReference type="EMBL" id="X98399">
    <property type="protein sequence ID" value="CAA67049.1"/>
    <property type="status" value="ALT_SEQ"/>
    <property type="molecule type" value="mRNA"/>
</dbReference>
<dbReference type="RefSeq" id="NP_062219.2">
    <property type="nucleotide sequence ID" value="NM_019346.2"/>
</dbReference>
<dbReference type="SMR" id="P97689"/>
<dbReference type="BioGRID" id="248521">
    <property type="interactions" value="1"/>
</dbReference>
<dbReference type="FunCoup" id="P97689">
    <property type="interactions" value="1048"/>
</dbReference>
<dbReference type="STRING" id="10116.ENSRNOP00000065722"/>
<dbReference type="BindingDB" id="P97689"/>
<dbReference type="ChEMBL" id="CHEMBL3739247"/>
<dbReference type="GuidetoPHARMACOLOGY" id="982"/>
<dbReference type="TCDB" id="1.A.28.1.3">
    <property type="family name" value="the urea transporter (ut) family"/>
</dbReference>
<dbReference type="GlyCosmos" id="P97689">
    <property type="glycosylation" value="1 site, No reported glycans"/>
</dbReference>
<dbReference type="GlyGen" id="P97689">
    <property type="glycosylation" value="1 site"/>
</dbReference>
<dbReference type="PhosphoSitePlus" id="P97689"/>
<dbReference type="PaxDb" id="10116-ENSRNOP00000022598"/>
<dbReference type="GeneID" id="54301"/>
<dbReference type="KEGG" id="rno:54301"/>
<dbReference type="AGR" id="RGD:3688"/>
<dbReference type="CTD" id="6563"/>
<dbReference type="RGD" id="3688">
    <property type="gene designation" value="Slc14a1"/>
</dbReference>
<dbReference type="eggNOG" id="ENOG502S2GD">
    <property type="taxonomic scope" value="Eukaryota"/>
</dbReference>
<dbReference type="InParanoid" id="P97689"/>
<dbReference type="OrthoDB" id="426293at2759"/>
<dbReference type="Reactome" id="R-RNO-425366">
    <property type="pathway name" value="Transport of bile salts and organic acids, metal ions and amine compounds"/>
</dbReference>
<dbReference type="PRO" id="PR:P97689"/>
<dbReference type="Proteomes" id="UP000002494">
    <property type="component" value="Unplaced"/>
</dbReference>
<dbReference type="GO" id="GO:0016323">
    <property type="term" value="C:basolateral plasma membrane"/>
    <property type="evidence" value="ECO:0000250"/>
    <property type="project" value="UniProtKB"/>
</dbReference>
<dbReference type="GO" id="GO:0005886">
    <property type="term" value="C:plasma membrane"/>
    <property type="evidence" value="ECO:0000250"/>
    <property type="project" value="UniProtKB"/>
</dbReference>
<dbReference type="GO" id="GO:0015265">
    <property type="term" value="F:urea channel activity"/>
    <property type="evidence" value="ECO:0000250"/>
    <property type="project" value="UniProtKB"/>
</dbReference>
<dbReference type="GO" id="GO:0015204">
    <property type="term" value="F:urea transmembrane transporter activity"/>
    <property type="evidence" value="ECO:0000314"/>
    <property type="project" value="RGD"/>
</dbReference>
<dbReference type="GO" id="GO:0005372">
    <property type="term" value="F:water transmembrane transporter activity"/>
    <property type="evidence" value="ECO:0000266"/>
    <property type="project" value="RGD"/>
</dbReference>
<dbReference type="GO" id="GO:0051649">
    <property type="term" value="P:establishment of localization in cell"/>
    <property type="evidence" value="ECO:0000266"/>
    <property type="project" value="RGD"/>
</dbReference>
<dbReference type="GO" id="GO:0071918">
    <property type="term" value="P:urea transmembrane transport"/>
    <property type="evidence" value="ECO:0000250"/>
    <property type="project" value="UniProtKB"/>
</dbReference>
<dbReference type="GO" id="GO:0015840">
    <property type="term" value="P:urea transport"/>
    <property type="evidence" value="ECO:0000314"/>
    <property type="project" value="RGD"/>
</dbReference>
<dbReference type="GO" id="GO:0006833">
    <property type="term" value="P:water transport"/>
    <property type="evidence" value="ECO:0000266"/>
    <property type="project" value="RGD"/>
</dbReference>
<dbReference type="FunFam" id="1.10.3430.10:FF:000002">
    <property type="entry name" value="urea transporter 2"/>
    <property type="match status" value="1"/>
</dbReference>
<dbReference type="Gene3D" id="1.10.3430.10">
    <property type="entry name" value="Ammonium transporter AmtB like domains"/>
    <property type="match status" value="1"/>
</dbReference>
<dbReference type="InterPro" id="IPR029020">
    <property type="entry name" value="Ammonium/urea_transptr"/>
</dbReference>
<dbReference type="InterPro" id="IPR004937">
    <property type="entry name" value="Urea_transporter"/>
</dbReference>
<dbReference type="PANTHER" id="PTHR10464">
    <property type="entry name" value="UREA TRANSPORTER"/>
    <property type="match status" value="1"/>
</dbReference>
<dbReference type="PANTHER" id="PTHR10464:SF5">
    <property type="entry name" value="UREA TRANSPORTER 1"/>
    <property type="match status" value="1"/>
</dbReference>
<dbReference type="Pfam" id="PF03253">
    <property type="entry name" value="UT"/>
    <property type="match status" value="1"/>
</dbReference>
<dbReference type="PIRSF" id="PIRSF016502">
    <property type="entry name" value="Urea_transporter"/>
    <property type="match status" value="1"/>
</dbReference>